<gene>
    <name evidence="1" type="primary">rplI</name>
    <name type="ordered locus">RBE_0120</name>
</gene>
<feature type="chain" id="PRO_0000258485" description="Large ribosomal subunit protein bL9">
    <location>
        <begin position="1"/>
        <end position="173"/>
    </location>
</feature>
<sequence length="173" mass="19649">MEVILIKPVRKLGKIGEIHKVADGFGRNYLLPQKLAIRATELNKELIVKQKHELEEKDKQIKSEITKINDLIKDQKLIFVRQTSDDGKLFGSVNNKEIAEKLSQAVSYPISHLNIILDTQIKSTGIYKVEVRLHAELSTEVTVIVARSESEIQDYLREQKTEKSTTEPLAESA</sequence>
<keyword id="KW-0687">Ribonucleoprotein</keyword>
<keyword id="KW-0689">Ribosomal protein</keyword>
<keyword id="KW-0694">RNA-binding</keyword>
<keyword id="KW-0699">rRNA-binding</keyword>
<dbReference type="EMBL" id="CP000087">
    <property type="protein sequence ID" value="ABE04201.1"/>
    <property type="molecule type" value="Genomic_DNA"/>
</dbReference>
<dbReference type="RefSeq" id="WP_011476816.1">
    <property type="nucleotide sequence ID" value="NC_007940.1"/>
</dbReference>
<dbReference type="SMR" id="Q1RKB3"/>
<dbReference type="KEGG" id="rbe:RBE_0120"/>
<dbReference type="eggNOG" id="COG0359">
    <property type="taxonomic scope" value="Bacteria"/>
</dbReference>
<dbReference type="HOGENOM" id="CLU_078938_3_0_5"/>
<dbReference type="OrthoDB" id="9788336at2"/>
<dbReference type="Proteomes" id="UP000001951">
    <property type="component" value="Chromosome"/>
</dbReference>
<dbReference type="GO" id="GO:1990904">
    <property type="term" value="C:ribonucleoprotein complex"/>
    <property type="evidence" value="ECO:0007669"/>
    <property type="project" value="UniProtKB-KW"/>
</dbReference>
<dbReference type="GO" id="GO:0005840">
    <property type="term" value="C:ribosome"/>
    <property type="evidence" value="ECO:0007669"/>
    <property type="project" value="UniProtKB-KW"/>
</dbReference>
<dbReference type="GO" id="GO:0019843">
    <property type="term" value="F:rRNA binding"/>
    <property type="evidence" value="ECO:0007669"/>
    <property type="project" value="UniProtKB-UniRule"/>
</dbReference>
<dbReference type="GO" id="GO:0003735">
    <property type="term" value="F:structural constituent of ribosome"/>
    <property type="evidence" value="ECO:0007669"/>
    <property type="project" value="InterPro"/>
</dbReference>
<dbReference type="GO" id="GO:0006412">
    <property type="term" value="P:translation"/>
    <property type="evidence" value="ECO:0007669"/>
    <property type="project" value="UniProtKB-UniRule"/>
</dbReference>
<dbReference type="Gene3D" id="3.10.430.100">
    <property type="entry name" value="Ribosomal protein L9, C-terminal domain"/>
    <property type="match status" value="1"/>
</dbReference>
<dbReference type="Gene3D" id="3.40.5.10">
    <property type="entry name" value="Ribosomal protein L9, N-terminal domain"/>
    <property type="match status" value="1"/>
</dbReference>
<dbReference type="HAMAP" id="MF_00503">
    <property type="entry name" value="Ribosomal_bL9"/>
    <property type="match status" value="1"/>
</dbReference>
<dbReference type="InterPro" id="IPR000244">
    <property type="entry name" value="Ribosomal_bL9"/>
</dbReference>
<dbReference type="InterPro" id="IPR009027">
    <property type="entry name" value="Ribosomal_bL9/RNase_H1_N"/>
</dbReference>
<dbReference type="InterPro" id="IPR020594">
    <property type="entry name" value="Ribosomal_bL9_bac/chp"/>
</dbReference>
<dbReference type="InterPro" id="IPR020069">
    <property type="entry name" value="Ribosomal_bL9_C"/>
</dbReference>
<dbReference type="InterPro" id="IPR036791">
    <property type="entry name" value="Ribosomal_bL9_C_sf"/>
</dbReference>
<dbReference type="InterPro" id="IPR020070">
    <property type="entry name" value="Ribosomal_bL9_N"/>
</dbReference>
<dbReference type="InterPro" id="IPR036935">
    <property type="entry name" value="Ribosomal_bL9_N_sf"/>
</dbReference>
<dbReference type="NCBIfam" id="TIGR00158">
    <property type="entry name" value="L9"/>
    <property type="match status" value="1"/>
</dbReference>
<dbReference type="PANTHER" id="PTHR21368">
    <property type="entry name" value="50S RIBOSOMAL PROTEIN L9"/>
    <property type="match status" value="1"/>
</dbReference>
<dbReference type="Pfam" id="PF03948">
    <property type="entry name" value="Ribosomal_L9_C"/>
    <property type="match status" value="1"/>
</dbReference>
<dbReference type="Pfam" id="PF01281">
    <property type="entry name" value="Ribosomal_L9_N"/>
    <property type="match status" value="1"/>
</dbReference>
<dbReference type="SUPFAM" id="SSF55658">
    <property type="entry name" value="L9 N-domain-like"/>
    <property type="match status" value="1"/>
</dbReference>
<dbReference type="SUPFAM" id="SSF55653">
    <property type="entry name" value="Ribosomal protein L9 C-domain"/>
    <property type="match status" value="1"/>
</dbReference>
<dbReference type="PROSITE" id="PS00651">
    <property type="entry name" value="RIBOSOMAL_L9"/>
    <property type="match status" value="1"/>
</dbReference>
<protein>
    <recommendedName>
        <fullName evidence="1">Large ribosomal subunit protein bL9</fullName>
    </recommendedName>
    <alternativeName>
        <fullName evidence="2">50S ribosomal protein L9</fullName>
    </alternativeName>
</protein>
<accession>Q1RKB3</accession>
<name>RL9_RICBR</name>
<evidence type="ECO:0000255" key="1">
    <source>
        <dbReference type="HAMAP-Rule" id="MF_00503"/>
    </source>
</evidence>
<evidence type="ECO:0000305" key="2"/>
<reference key="1">
    <citation type="journal article" date="2006" name="PLoS Genet.">
        <title>Genome sequence of Rickettsia bellii illuminates the role of amoebae in gene exchanges between intracellular pathogens.</title>
        <authorList>
            <person name="Ogata H."/>
            <person name="La Scola B."/>
            <person name="Audic S."/>
            <person name="Renesto P."/>
            <person name="Blanc G."/>
            <person name="Robert C."/>
            <person name="Fournier P.-E."/>
            <person name="Claverie J.-M."/>
            <person name="Raoult D."/>
        </authorList>
    </citation>
    <scope>NUCLEOTIDE SEQUENCE [LARGE SCALE GENOMIC DNA]</scope>
    <source>
        <strain>RML369-C</strain>
    </source>
</reference>
<organism>
    <name type="scientific">Rickettsia bellii (strain RML369-C)</name>
    <dbReference type="NCBI Taxonomy" id="336407"/>
    <lineage>
        <taxon>Bacteria</taxon>
        <taxon>Pseudomonadati</taxon>
        <taxon>Pseudomonadota</taxon>
        <taxon>Alphaproteobacteria</taxon>
        <taxon>Rickettsiales</taxon>
        <taxon>Rickettsiaceae</taxon>
        <taxon>Rickettsieae</taxon>
        <taxon>Rickettsia</taxon>
        <taxon>belli group</taxon>
    </lineage>
</organism>
<proteinExistence type="inferred from homology"/>
<comment type="function">
    <text evidence="1">Binds to the 23S rRNA.</text>
</comment>
<comment type="similarity">
    <text evidence="1">Belongs to the bacterial ribosomal protein bL9 family.</text>
</comment>